<comment type="function">
    <text evidence="1">Catalyzes the transfer of an acyl group from acyl-phosphate (acyl-PO(4)) to glycerol-3-phosphate (G3P) to form lysophosphatidic acid (LPA). This enzyme utilizes acyl-phosphate as fatty acyl donor, but not acyl-CoA or acyl-ACP.</text>
</comment>
<comment type="catalytic activity">
    <reaction evidence="1">
        <text>an acyl phosphate + sn-glycerol 3-phosphate = a 1-acyl-sn-glycero-3-phosphate + phosphate</text>
        <dbReference type="Rhea" id="RHEA:34075"/>
        <dbReference type="ChEBI" id="CHEBI:43474"/>
        <dbReference type="ChEBI" id="CHEBI:57597"/>
        <dbReference type="ChEBI" id="CHEBI:57970"/>
        <dbReference type="ChEBI" id="CHEBI:59918"/>
        <dbReference type="EC" id="2.3.1.275"/>
    </reaction>
</comment>
<comment type="pathway">
    <text evidence="1">Lipid metabolism; phospholipid metabolism.</text>
</comment>
<comment type="subunit">
    <text evidence="1">Probably interacts with PlsX.</text>
</comment>
<comment type="subcellular location">
    <subcellularLocation>
        <location evidence="1">Cell membrane</location>
        <topology evidence="1">Multi-pass membrane protein</topology>
    </subcellularLocation>
</comment>
<comment type="similarity">
    <text evidence="1">Belongs to the PlsY family.</text>
</comment>
<name>PLSY_STAAM</name>
<organism>
    <name type="scientific">Staphylococcus aureus (strain Mu50 / ATCC 700699)</name>
    <dbReference type="NCBI Taxonomy" id="158878"/>
    <lineage>
        <taxon>Bacteria</taxon>
        <taxon>Bacillati</taxon>
        <taxon>Bacillota</taxon>
        <taxon>Bacilli</taxon>
        <taxon>Bacillales</taxon>
        <taxon>Staphylococcaceae</taxon>
        <taxon>Staphylococcus</taxon>
    </lineage>
</organism>
<sequence length="202" mass="22232">MMIIVMLLLSYLIGAFPSGFVIGKLFFKKDIRQFGSGNTGATNSFRVLGRPAGFLVTFLDIFKGFITVFFPLWLPVHADGPISTFFTNGLIVGLFAILGHVYPVYLKFQGGKAVATSAGVVLGVNPILLLILAIIFFIVLKIFKYVSLASIVAAICCVIGSLIIQDYILLVVSFLVSIILIIRHRSNIARIFRGEEPKIKWM</sequence>
<reference key="1">
    <citation type="journal article" date="2001" name="Lancet">
        <title>Whole genome sequencing of meticillin-resistant Staphylococcus aureus.</title>
        <authorList>
            <person name="Kuroda M."/>
            <person name="Ohta T."/>
            <person name="Uchiyama I."/>
            <person name="Baba T."/>
            <person name="Yuzawa H."/>
            <person name="Kobayashi I."/>
            <person name="Cui L."/>
            <person name="Oguchi A."/>
            <person name="Aoki K."/>
            <person name="Nagai Y."/>
            <person name="Lian J.-Q."/>
            <person name="Ito T."/>
            <person name="Kanamori M."/>
            <person name="Matsumaru H."/>
            <person name="Maruyama A."/>
            <person name="Murakami H."/>
            <person name="Hosoyama A."/>
            <person name="Mizutani-Ui Y."/>
            <person name="Takahashi N.K."/>
            <person name="Sawano T."/>
            <person name="Inoue R."/>
            <person name="Kaito C."/>
            <person name="Sekimizu K."/>
            <person name="Hirakawa H."/>
            <person name="Kuhara S."/>
            <person name="Goto S."/>
            <person name="Yabuzaki J."/>
            <person name="Kanehisa M."/>
            <person name="Yamashita A."/>
            <person name="Oshima K."/>
            <person name="Furuya K."/>
            <person name="Yoshino C."/>
            <person name="Shiba T."/>
            <person name="Hattori M."/>
            <person name="Ogasawara N."/>
            <person name="Hayashi H."/>
            <person name="Hiramatsu K."/>
        </authorList>
    </citation>
    <scope>NUCLEOTIDE SEQUENCE [LARGE SCALE GENOMIC DNA]</scope>
    <source>
        <strain>Mu50 / ATCC 700699</strain>
    </source>
</reference>
<evidence type="ECO:0000255" key="1">
    <source>
        <dbReference type="HAMAP-Rule" id="MF_01043"/>
    </source>
</evidence>
<dbReference type="EC" id="2.3.1.275" evidence="1"/>
<dbReference type="EMBL" id="BA000017">
    <property type="protein sequence ID" value="BAB57515.1"/>
    <property type="molecule type" value="Genomic_DNA"/>
</dbReference>
<dbReference type="RefSeq" id="WP_000972779.1">
    <property type="nucleotide sequence ID" value="NC_002758.2"/>
</dbReference>
<dbReference type="SMR" id="P67163"/>
<dbReference type="KEGG" id="sav:SAV1353"/>
<dbReference type="HOGENOM" id="CLU_081254_4_0_9"/>
<dbReference type="PhylomeDB" id="P67163"/>
<dbReference type="UniPathway" id="UPA00085"/>
<dbReference type="Proteomes" id="UP000002481">
    <property type="component" value="Chromosome"/>
</dbReference>
<dbReference type="GO" id="GO:0005886">
    <property type="term" value="C:plasma membrane"/>
    <property type="evidence" value="ECO:0007669"/>
    <property type="project" value="UniProtKB-SubCell"/>
</dbReference>
<dbReference type="GO" id="GO:0043772">
    <property type="term" value="F:acyl-phosphate glycerol-3-phosphate acyltransferase activity"/>
    <property type="evidence" value="ECO:0007669"/>
    <property type="project" value="UniProtKB-UniRule"/>
</dbReference>
<dbReference type="GO" id="GO:0008654">
    <property type="term" value="P:phospholipid biosynthetic process"/>
    <property type="evidence" value="ECO:0007669"/>
    <property type="project" value="UniProtKB-UniRule"/>
</dbReference>
<dbReference type="HAMAP" id="MF_01043">
    <property type="entry name" value="PlsY"/>
    <property type="match status" value="1"/>
</dbReference>
<dbReference type="InterPro" id="IPR003811">
    <property type="entry name" value="G3P_acylTferase_PlsY"/>
</dbReference>
<dbReference type="NCBIfam" id="TIGR00023">
    <property type="entry name" value="glycerol-3-phosphate 1-O-acyltransferase PlsY"/>
    <property type="match status" value="1"/>
</dbReference>
<dbReference type="PANTHER" id="PTHR30309:SF0">
    <property type="entry name" value="GLYCEROL-3-PHOSPHATE ACYLTRANSFERASE-RELATED"/>
    <property type="match status" value="1"/>
</dbReference>
<dbReference type="PANTHER" id="PTHR30309">
    <property type="entry name" value="INNER MEMBRANE PROTEIN YGIH"/>
    <property type="match status" value="1"/>
</dbReference>
<dbReference type="Pfam" id="PF02660">
    <property type="entry name" value="G3P_acyltransf"/>
    <property type="match status" value="1"/>
</dbReference>
<dbReference type="SMART" id="SM01207">
    <property type="entry name" value="G3P_acyltransf"/>
    <property type="match status" value="1"/>
</dbReference>
<protein>
    <recommendedName>
        <fullName evidence="1">Glycerol-3-phosphate acyltransferase</fullName>
    </recommendedName>
    <alternativeName>
        <fullName evidence="1">Acyl-PO4 G3P acyltransferase</fullName>
    </alternativeName>
    <alternativeName>
        <fullName evidence="1">Acyl-phosphate--glycerol-3-phosphate acyltransferase</fullName>
    </alternativeName>
    <alternativeName>
        <fullName evidence="1">G3P acyltransferase</fullName>
        <shortName evidence="1">GPAT</shortName>
        <ecNumber evidence="1">2.3.1.275</ecNumber>
    </alternativeName>
    <alternativeName>
        <fullName evidence="1">Lysophosphatidic acid synthase</fullName>
        <shortName evidence="1">LPA synthase</shortName>
    </alternativeName>
</protein>
<gene>
    <name evidence="1" type="primary">plsY</name>
    <name type="ordered locus">SAV1353</name>
</gene>
<keyword id="KW-1003">Cell membrane</keyword>
<keyword id="KW-0444">Lipid biosynthesis</keyword>
<keyword id="KW-0443">Lipid metabolism</keyword>
<keyword id="KW-0472">Membrane</keyword>
<keyword id="KW-0594">Phospholipid biosynthesis</keyword>
<keyword id="KW-1208">Phospholipid metabolism</keyword>
<keyword id="KW-0808">Transferase</keyword>
<keyword id="KW-0812">Transmembrane</keyword>
<keyword id="KW-1133">Transmembrane helix</keyword>
<feature type="chain" id="PRO_0000188452" description="Glycerol-3-phosphate acyltransferase">
    <location>
        <begin position="1"/>
        <end position="202"/>
    </location>
</feature>
<feature type="transmembrane region" description="Helical" evidence="1">
    <location>
        <begin position="2"/>
        <end position="22"/>
    </location>
</feature>
<feature type="transmembrane region" description="Helical" evidence="1">
    <location>
        <begin position="54"/>
        <end position="74"/>
    </location>
</feature>
<feature type="transmembrane region" description="Helical" evidence="1">
    <location>
        <begin position="85"/>
        <end position="105"/>
    </location>
</feature>
<feature type="transmembrane region" description="Helical" evidence="1">
    <location>
        <begin position="120"/>
        <end position="140"/>
    </location>
</feature>
<feature type="transmembrane region" description="Helical" evidence="1">
    <location>
        <begin position="141"/>
        <end position="161"/>
    </location>
</feature>
<feature type="transmembrane region" description="Helical" evidence="1">
    <location>
        <begin position="162"/>
        <end position="182"/>
    </location>
</feature>
<accession>P67163</accession>
<accession>Q99UC5</accession>
<proteinExistence type="inferred from homology"/>